<evidence type="ECO:0000255" key="1">
    <source>
        <dbReference type="HAMAP-Rule" id="MF_00052"/>
    </source>
</evidence>
<evidence type="ECO:0000255" key="2">
    <source>
        <dbReference type="PROSITE-ProRule" id="PRU01319"/>
    </source>
</evidence>
<reference key="1">
    <citation type="submission" date="2008-03" db="EMBL/GenBank/DDBJ databases">
        <title>Complete sequence of Thermoproteus neutrophilus V24Sta.</title>
        <authorList>
            <consortium name="US DOE Joint Genome Institute"/>
            <person name="Copeland A."/>
            <person name="Lucas S."/>
            <person name="Lapidus A."/>
            <person name="Glavina del Rio T."/>
            <person name="Dalin E."/>
            <person name="Tice H."/>
            <person name="Bruce D."/>
            <person name="Goodwin L."/>
            <person name="Pitluck S."/>
            <person name="Sims D."/>
            <person name="Brettin T."/>
            <person name="Detter J.C."/>
            <person name="Han C."/>
            <person name="Kuske C.R."/>
            <person name="Schmutz J."/>
            <person name="Larimer F."/>
            <person name="Land M."/>
            <person name="Hauser L."/>
            <person name="Kyrpides N."/>
            <person name="Mikhailova N."/>
            <person name="Biddle J.F."/>
            <person name="Zhang Z."/>
            <person name="Fitz-Gibbon S.T."/>
            <person name="Lowe T.M."/>
            <person name="Saltikov C."/>
            <person name="House C.H."/>
            <person name="Richardson P."/>
        </authorList>
    </citation>
    <scope>NUCLEOTIDE SEQUENCE [LARGE SCALE GENOMIC DNA]</scope>
    <source>
        <strain>DSM 2338 / JCM 9278 / NBRC 100436 / V24Sta</strain>
    </source>
</reference>
<accession>B1YB67</accession>
<sequence length="198" mass="21939">MSFLEGGVDEAGRGPVVGPMVIAVVVGDGGVLARLGVRDSKRLSPERRERLYQLILEAADCVNYVVVEPAVVDTYVWRGLLNALELDYTAKLIELCPADVYYVDSPDVDPRRYGSALEFITGRRVVAMHKGESVPQVAAASIVAKVVRDRLVALLKKEVGDFGSGYPSDPRTREWLKWGRLPPECVRWSWRTLRGESP</sequence>
<dbReference type="EC" id="3.1.26.4" evidence="1"/>
<dbReference type="EMBL" id="CP001014">
    <property type="protein sequence ID" value="ACB39198.1"/>
    <property type="molecule type" value="Genomic_DNA"/>
</dbReference>
<dbReference type="RefSeq" id="WP_012349619.1">
    <property type="nucleotide sequence ID" value="NC_010525.1"/>
</dbReference>
<dbReference type="SMR" id="B1YB67"/>
<dbReference type="STRING" id="444157.Tneu_0245"/>
<dbReference type="GeneID" id="6166086"/>
<dbReference type="KEGG" id="tne:Tneu_0245"/>
<dbReference type="eggNOG" id="arCOG04121">
    <property type="taxonomic scope" value="Archaea"/>
</dbReference>
<dbReference type="HOGENOM" id="CLU_036532_0_4_2"/>
<dbReference type="OrthoDB" id="33866at2157"/>
<dbReference type="Proteomes" id="UP000001694">
    <property type="component" value="Chromosome"/>
</dbReference>
<dbReference type="GO" id="GO:0005737">
    <property type="term" value="C:cytoplasm"/>
    <property type="evidence" value="ECO:0007669"/>
    <property type="project" value="UniProtKB-SubCell"/>
</dbReference>
<dbReference type="GO" id="GO:0032299">
    <property type="term" value="C:ribonuclease H2 complex"/>
    <property type="evidence" value="ECO:0007669"/>
    <property type="project" value="TreeGrafter"/>
</dbReference>
<dbReference type="GO" id="GO:0030145">
    <property type="term" value="F:manganese ion binding"/>
    <property type="evidence" value="ECO:0007669"/>
    <property type="project" value="UniProtKB-UniRule"/>
</dbReference>
<dbReference type="GO" id="GO:0003723">
    <property type="term" value="F:RNA binding"/>
    <property type="evidence" value="ECO:0007669"/>
    <property type="project" value="InterPro"/>
</dbReference>
<dbReference type="GO" id="GO:0004523">
    <property type="term" value="F:RNA-DNA hybrid ribonuclease activity"/>
    <property type="evidence" value="ECO:0007669"/>
    <property type="project" value="UniProtKB-UniRule"/>
</dbReference>
<dbReference type="GO" id="GO:0043137">
    <property type="term" value="P:DNA replication, removal of RNA primer"/>
    <property type="evidence" value="ECO:0007669"/>
    <property type="project" value="TreeGrafter"/>
</dbReference>
<dbReference type="GO" id="GO:0006298">
    <property type="term" value="P:mismatch repair"/>
    <property type="evidence" value="ECO:0007669"/>
    <property type="project" value="TreeGrafter"/>
</dbReference>
<dbReference type="CDD" id="cd07180">
    <property type="entry name" value="RNase_HII_archaea_like"/>
    <property type="match status" value="1"/>
</dbReference>
<dbReference type="Gene3D" id="3.30.420.10">
    <property type="entry name" value="Ribonuclease H-like superfamily/Ribonuclease H"/>
    <property type="match status" value="1"/>
</dbReference>
<dbReference type="Gene3D" id="1.10.10.460">
    <property type="entry name" value="Ribonuclease hii. Domain 2"/>
    <property type="match status" value="1"/>
</dbReference>
<dbReference type="HAMAP" id="MF_00052_A">
    <property type="entry name" value="RNase_HII_A"/>
    <property type="match status" value="1"/>
</dbReference>
<dbReference type="InterPro" id="IPR004649">
    <property type="entry name" value="RNase_H2_suA"/>
</dbReference>
<dbReference type="InterPro" id="IPR001352">
    <property type="entry name" value="RNase_HII/HIII"/>
</dbReference>
<dbReference type="InterPro" id="IPR024567">
    <property type="entry name" value="RNase_HII/HIII_dom"/>
</dbReference>
<dbReference type="InterPro" id="IPR020787">
    <property type="entry name" value="RNase_HII_arc"/>
</dbReference>
<dbReference type="InterPro" id="IPR023160">
    <property type="entry name" value="RNase_HII_hlx-loop-hlx_cap_dom"/>
</dbReference>
<dbReference type="InterPro" id="IPR012337">
    <property type="entry name" value="RNaseH-like_sf"/>
</dbReference>
<dbReference type="InterPro" id="IPR036397">
    <property type="entry name" value="RNaseH_sf"/>
</dbReference>
<dbReference type="NCBIfam" id="TIGR00729">
    <property type="entry name" value="ribonuclease HII"/>
    <property type="match status" value="1"/>
</dbReference>
<dbReference type="PANTHER" id="PTHR10954:SF23">
    <property type="entry name" value="RIBONUCLEASE"/>
    <property type="match status" value="1"/>
</dbReference>
<dbReference type="PANTHER" id="PTHR10954">
    <property type="entry name" value="RIBONUCLEASE H2 SUBUNIT A"/>
    <property type="match status" value="1"/>
</dbReference>
<dbReference type="Pfam" id="PF01351">
    <property type="entry name" value="RNase_HII"/>
    <property type="match status" value="1"/>
</dbReference>
<dbReference type="SUPFAM" id="SSF53098">
    <property type="entry name" value="Ribonuclease H-like"/>
    <property type="match status" value="1"/>
</dbReference>
<dbReference type="PROSITE" id="PS51975">
    <property type="entry name" value="RNASE_H_2"/>
    <property type="match status" value="1"/>
</dbReference>
<proteinExistence type="inferred from homology"/>
<organism>
    <name type="scientific">Pyrobaculum neutrophilum (strain DSM 2338 / JCM 9278 / NBRC 100436 / V24Sta)</name>
    <name type="common">Thermoproteus neutrophilus</name>
    <dbReference type="NCBI Taxonomy" id="444157"/>
    <lineage>
        <taxon>Archaea</taxon>
        <taxon>Thermoproteota</taxon>
        <taxon>Thermoprotei</taxon>
        <taxon>Thermoproteales</taxon>
        <taxon>Thermoproteaceae</taxon>
        <taxon>Pyrobaculum</taxon>
    </lineage>
</organism>
<name>RNH2_PYRNV</name>
<gene>
    <name evidence="1" type="primary">rnhB</name>
    <name type="ordered locus">Tneu_0245</name>
</gene>
<feature type="chain" id="PRO_1000117692" description="Ribonuclease HII">
    <location>
        <begin position="1"/>
        <end position="198"/>
    </location>
</feature>
<feature type="domain" description="RNase H type-2" evidence="2">
    <location>
        <begin position="3"/>
        <end position="198"/>
    </location>
</feature>
<feature type="binding site" evidence="1">
    <location>
        <position position="9"/>
    </location>
    <ligand>
        <name>a divalent metal cation</name>
        <dbReference type="ChEBI" id="CHEBI:60240"/>
    </ligand>
</feature>
<feature type="binding site" evidence="1">
    <location>
        <position position="10"/>
    </location>
    <ligand>
        <name>a divalent metal cation</name>
        <dbReference type="ChEBI" id="CHEBI:60240"/>
    </ligand>
</feature>
<feature type="binding site" evidence="1">
    <location>
        <position position="104"/>
    </location>
    <ligand>
        <name>a divalent metal cation</name>
        <dbReference type="ChEBI" id="CHEBI:60240"/>
    </ligand>
</feature>
<keyword id="KW-0963">Cytoplasm</keyword>
<keyword id="KW-0255">Endonuclease</keyword>
<keyword id="KW-0378">Hydrolase</keyword>
<keyword id="KW-0464">Manganese</keyword>
<keyword id="KW-0479">Metal-binding</keyword>
<keyword id="KW-0540">Nuclease</keyword>
<protein>
    <recommendedName>
        <fullName evidence="1">Ribonuclease HII</fullName>
        <shortName evidence="1">RNase HII</shortName>
        <ecNumber evidence="1">3.1.26.4</ecNumber>
    </recommendedName>
</protein>
<comment type="function">
    <text evidence="1">Endonuclease that specifically degrades the RNA of RNA-DNA hybrids.</text>
</comment>
<comment type="catalytic activity">
    <reaction evidence="1">
        <text>Endonucleolytic cleavage to 5'-phosphomonoester.</text>
        <dbReference type="EC" id="3.1.26.4"/>
    </reaction>
</comment>
<comment type="cofactor">
    <cofactor evidence="1">
        <name>Mn(2+)</name>
        <dbReference type="ChEBI" id="CHEBI:29035"/>
    </cofactor>
    <cofactor evidence="1">
        <name>Mg(2+)</name>
        <dbReference type="ChEBI" id="CHEBI:18420"/>
    </cofactor>
    <text evidence="1">Manganese or magnesium. Binds 1 divalent metal ion per monomer in the absence of substrate. May bind a second metal ion after substrate binding.</text>
</comment>
<comment type="subcellular location">
    <subcellularLocation>
        <location evidence="1">Cytoplasm</location>
    </subcellularLocation>
</comment>
<comment type="similarity">
    <text evidence="1">Belongs to the RNase HII family.</text>
</comment>